<comment type="function">
    <text evidence="1">Involved in the biosynthesis of ADP-glucose, a building block required for the elongation reactions to produce glycogen. Catalyzes the reaction between ATP and alpha-D-glucose 1-phosphate (G1P) to produce pyrophosphate and ADP-Glc.</text>
</comment>
<comment type="catalytic activity">
    <reaction evidence="1">
        <text>alpha-D-glucose 1-phosphate + ATP + H(+) = ADP-alpha-D-glucose + diphosphate</text>
        <dbReference type="Rhea" id="RHEA:12120"/>
        <dbReference type="ChEBI" id="CHEBI:15378"/>
        <dbReference type="ChEBI" id="CHEBI:30616"/>
        <dbReference type="ChEBI" id="CHEBI:33019"/>
        <dbReference type="ChEBI" id="CHEBI:57498"/>
        <dbReference type="ChEBI" id="CHEBI:58601"/>
        <dbReference type="EC" id="2.7.7.27"/>
    </reaction>
</comment>
<comment type="pathway">
    <text evidence="1">Glycan biosynthesis; glycogen biosynthesis.</text>
</comment>
<comment type="subunit">
    <text evidence="1">Homotetramer.</text>
</comment>
<comment type="similarity">
    <text evidence="1">Belongs to the bacterial/plant glucose-1-phosphate adenylyltransferase family.</text>
</comment>
<proteinExistence type="inferred from homology"/>
<evidence type="ECO:0000255" key="1">
    <source>
        <dbReference type="HAMAP-Rule" id="MF_00624"/>
    </source>
</evidence>
<feature type="chain" id="PRO_0000261897" description="Glucose-1-phosphate adenylyltransferase">
    <location>
        <begin position="1"/>
        <end position="420"/>
    </location>
</feature>
<feature type="binding site" evidence="1">
    <location>
        <position position="107"/>
    </location>
    <ligand>
        <name>alpha-D-glucose 1-phosphate</name>
        <dbReference type="ChEBI" id="CHEBI:58601"/>
    </ligand>
</feature>
<feature type="binding site" evidence="1">
    <location>
        <position position="173"/>
    </location>
    <ligand>
        <name>alpha-D-glucose 1-phosphate</name>
        <dbReference type="ChEBI" id="CHEBI:58601"/>
    </ligand>
</feature>
<feature type="binding site" evidence="1">
    <location>
        <begin position="188"/>
        <end position="189"/>
    </location>
    <ligand>
        <name>alpha-D-glucose 1-phosphate</name>
        <dbReference type="ChEBI" id="CHEBI:58601"/>
    </ligand>
</feature>
<feature type="binding site" evidence="1">
    <location>
        <position position="206"/>
    </location>
    <ligand>
        <name>alpha-D-glucose 1-phosphate</name>
        <dbReference type="ChEBI" id="CHEBI:58601"/>
    </ligand>
</feature>
<dbReference type="EC" id="2.7.7.27" evidence="1"/>
<dbReference type="EMBL" id="CP000447">
    <property type="protein sequence ID" value="ABI72008.1"/>
    <property type="molecule type" value="Genomic_DNA"/>
</dbReference>
<dbReference type="RefSeq" id="WP_011637618.1">
    <property type="nucleotide sequence ID" value="NC_008345.1"/>
</dbReference>
<dbReference type="SMR" id="Q081Q7"/>
<dbReference type="STRING" id="318167.Sfri_2162"/>
<dbReference type="KEGG" id="sfr:Sfri_2162"/>
<dbReference type="eggNOG" id="COG0448">
    <property type="taxonomic scope" value="Bacteria"/>
</dbReference>
<dbReference type="HOGENOM" id="CLU_029499_14_1_6"/>
<dbReference type="OrthoDB" id="9801810at2"/>
<dbReference type="UniPathway" id="UPA00164"/>
<dbReference type="Proteomes" id="UP000000684">
    <property type="component" value="Chromosome"/>
</dbReference>
<dbReference type="GO" id="GO:0005524">
    <property type="term" value="F:ATP binding"/>
    <property type="evidence" value="ECO:0007669"/>
    <property type="project" value="UniProtKB-KW"/>
</dbReference>
<dbReference type="GO" id="GO:0008878">
    <property type="term" value="F:glucose-1-phosphate adenylyltransferase activity"/>
    <property type="evidence" value="ECO:0007669"/>
    <property type="project" value="UniProtKB-UniRule"/>
</dbReference>
<dbReference type="GO" id="GO:0005978">
    <property type="term" value="P:glycogen biosynthetic process"/>
    <property type="evidence" value="ECO:0007669"/>
    <property type="project" value="UniProtKB-UniRule"/>
</dbReference>
<dbReference type="CDD" id="cd02508">
    <property type="entry name" value="ADP_Glucose_PP"/>
    <property type="match status" value="1"/>
</dbReference>
<dbReference type="CDD" id="cd04651">
    <property type="entry name" value="LbH_G1P_AT_C"/>
    <property type="match status" value="1"/>
</dbReference>
<dbReference type="Gene3D" id="2.160.10.10">
    <property type="entry name" value="Hexapeptide repeat proteins"/>
    <property type="match status" value="1"/>
</dbReference>
<dbReference type="Gene3D" id="3.90.550.10">
    <property type="entry name" value="Spore Coat Polysaccharide Biosynthesis Protein SpsA, Chain A"/>
    <property type="match status" value="1"/>
</dbReference>
<dbReference type="HAMAP" id="MF_00624">
    <property type="entry name" value="GlgC"/>
    <property type="match status" value="1"/>
</dbReference>
<dbReference type="InterPro" id="IPR011831">
    <property type="entry name" value="ADP-Glc_PPase"/>
</dbReference>
<dbReference type="InterPro" id="IPR005836">
    <property type="entry name" value="ADP_Glu_pyroP_CS"/>
</dbReference>
<dbReference type="InterPro" id="IPR023049">
    <property type="entry name" value="GlgC_bac"/>
</dbReference>
<dbReference type="InterPro" id="IPR056818">
    <property type="entry name" value="GlmU/GlgC-like_hexapep"/>
</dbReference>
<dbReference type="InterPro" id="IPR005835">
    <property type="entry name" value="NTP_transferase_dom"/>
</dbReference>
<dbReference type="InterPro" id="IPR029044">
    <property type="entry name" value="Nucleotide-diphossugar_trans"/>
</dbReference>
<dbReference type="InterPro" id="IPR011004">
    <property type="entry name" value="Trimer_LpxA-like_sf"/>
</dbReference>
<dbReference type="NCBIfam" id="TIGR02091">
    <property type="entry name" value="glgC"/>
    <property type="match status" value="1"/>
</dbReference>
<dbReference type="NCBIfam" id="NF001947">
    <property type="entry name" value="PRK00725.1"/>
    <property type="match status" value="1"/>
</dbReference>
<dbReference type="NCBIfam" id="NF002023">
    <property type="entry name" value="PRK00844.1"/>
    <property type="match status" value="1"/>
</dbReference>
<dbReference type="PANTHER" id="PTHR43523:SF2">
    <property type="entry name" value="GLUCOSE-1-PHOSPHATE ADENYLYLTRANSFERASE"/>
    <property type="match status" value="1"/>
</dbReference>
<dbReference type="PANTHER" id="PTHR43523">
    <property type="entry name" value="GLUCOSE-1-PHOSPHATE ADENYLYLTRANSFERASE-RELATED"/>
    <property type="match status" value="1"/>
</dbReference>
<dbReference type="Pfam" id="PF24894">
    <property type="entry name" value="Hexapep_GlmU"/>
    <property type="match status" value="1"/>
</dbReference>
<dbReference type="Pfam" id="PF00483">
    <property type="entry name" value="NTP_transferase"/>
    <property type="match status" value="1"/>
</dbReference>
<dbReference type="SUPFAM" id="SSF53448">
    <property type="entry name" value="Nucleotide-diphospho-sugar transferases"/>
    <property type="match status" value="1"/>
</dbReference>
<dbReference type="SUPFAM" id="SSF51161">
    <property type="entry name" value="Trimeric LpxA-like enzymes"/>
    <property type="match status" value="1"/>
</dbReference>
<dbReference type="PROSITE" id="PS00808">
    <property type="entry name" value="ADP_GLC_PYROPHOSPH_1"/>
    <property type="match status" value="1"/>
</dbReference>
<dbReference type="PROSITE" id="PS00809">
    <property type="entry name" value="ADP_GLC_PYROPHOSPH_2"/>
    <property type="match status" value="1"/>
</dbReference>
<dbReference type="PROSITE" id="PS00810">
    <property type="entry name" value="ADP_GLC_PYROPHOSPH_3"/>
    <property type="match status" value="1"/>
</dbReference>
<reference key="1">
    <citation type="submission" date="2006-08" db="EMBL/GenBank/DDBJ databases">
        <title>Complete sequence of Shewanella frigidimarina NCIMB 400.</title>
        <authorList>
            <consortium name="US DOE Joint Genome Institute"/>
            <person name="Copeland A."/>
            <person name="Lucas S."/>
            <person name="Lapidus A."/>
            <person name="Barry K."/>
            <person name="Detter J.C."/>
            <person name="Glavina del Rio T."/>
            <person name="Hammon N."/>
            <person name="Israni S."/>
            <person name="Dalin E."/>
            <person name="Tice H."/>
            <person name="Pitluck S."/>
            <person name="Fredrickson J.K."/>
            <person name="Kolker E."/>
            <person name="McCuel L.A."/>
            <person name="DiChristina T."/>
            <person name="Nealson K.H."/>
            <person name="Newman D."/>
            <person name="Tiedje J.M."/>
            <person name="Zhou J."/>
            <person name="Romine M.F."/>
            <person name="Culley D.E."/>
            <person name="Serres M."/>
            <person name="Chertkov O."/>
            <person name="Brettin T."/>
            <person name="Bruce D."/>
            <person name="Han C."/>
            <person name="Tapia R."/>
            <person name="Gilna P."/>
            <person name="Schmutz J."/>
            <person name="Larimer F."/>
            <person name="Land M."/>
            <person name="Hauser L."/>
            <person name="Kyrpides N."/>
            <person name="Mikhailova N."/>
            <person name="Richardson P."/>
        </authorList>
    </citation>
    <scope>NUCLEOTIDE SEQUENCE [LARGE SCALE GENOMIC DNA]</scope>
    <source>
        <strain>NCIMB 400</strain>
    </source>
</reference>
<accession>Q081Q7</accession>
<organism>
    <name type="scientific">Shewanella frigidimarina (strain NCIMB 400)</name>
    <dbReference type="NCBI Taxonomy" id="318167"/>
    <lineage>
        <taxon>Bacteria</taxon>
        <taxon>Pseudomonadati</taxon>
        <taxon>Pseudomonadota</taxon>
        <taxon>Gammaproteobacteria</taxon>
        <taxon>Alteromonadales</taxon>
        <taxon>Shewanellaceae</taxon>
        <taxon>Shewanella</taxon>
    </lineage>
</organism>
<gene>
    <name evidence="1" type="primary">glgC</name>
    <name type="ordered locus">Sfri_2162</name>
</gene>
<name>GLGC_SHEFN</name>
<keyword id="KW-0067">ATP-binding</keyword>
<keyword id="KW-0119">Carbohydrate metabolism</keyword>
<keyword id="KW-0320">Glycogen biosynthesis</keyword>
<keyword id="KW-0321">Glycogen metabolism</keyword>
<keyword id="KW-0547">Nucleotide-binding</keyword>
<keyword id="KW-0548">Nucleotidyltransferase</keyword>
<keyword id="KW-1185">Reference proteome</keyword>
<keyword id="KW-0808">Transferase</keyword>
<sequence length="420" mass="47023">MSNIRYISNLTRDTYALILAGGRGSRLYELTDWRAKPALYFGGKYRIIDFPLSNCINSGIRRVGVVTQYKSHSLIRHVTRGWGHFKKELGESVEILPASQQTSGNWYQGTADAVFQNIDIIRQEIPKYVMILSGDHIYRMDYAGLLAAHAESGAEMTVCCLETPIDEAAGAFGVMEVDSEHRVIGFEEKPAEPKSIPSDPTMCLASMGNYVFNTKFLFEQLKKDANNEKSDRDFGKDIIPAIIENHKVFAFPFSSAVAGQPSYWRDVGTLDSFFQANMELLLPTPPLNLYDAKWPIWTYQEQLPPAKFVFDDDDRRGMAVDSIVSGGCIISGAKVKRCVLFDEVRVCSYSFVKDSVLLPDVVVLKNCKIQNAILDRGCIIPEGMVIGYNHDHDRAKGFRVSEKGVTLVTRKMLGLPVGYE</sequence>
<protein>
    <recommendedName>
        <fullName evidence="1">Glucose-1-phosphate adenylyltransferase</fullName>
        <ecNumber evidence="1">2.7.7.27</ecNumber>
    </recommendedName>
    <alternativeName>
        <fullName evidence="1">ADP-glucose pyrophosphorylase</fullName>
        <shortName evidence="1">ADPGlc PPase</shortName>
    </alternativeName>
    <alternativeName>
        <fullName evidence="1">ADP-glucose synthase</fullName>
    </alternativeName>
</protein>